<accession>Q3V548</accession>
<feature type="chain" id="PRO_0000368899" description="ATP synthase subunit b, chloroplastic">
    <location>
        <begin position="1"/>
        <end position="184"/>
    </location>
</feature>
<feature type="transmembrane region" description="Helical" evidence="1">
    <location>
        <begin position="26"/>
        <end position="48"/>
    </location>
</feature>
<name>ATPF_ACOCL</name>
<geneLocation type="chloroplast"/>
<comment type="function">
    <text evidence="1">F(1)F(0) ATP synthase produces ATP from ADP in the presence of a proton or sodium gradient. F-type ATPases consist of two structural domains, F(1) containing the extramembraneous catalytic core and F(0) containing the membrane proton channel, linked together by a central stalk and a peripheral stalk. During catalysis, ATP synthesis in the catalytic domain of F(1) is coupled via a rotary mechanism of the central stalk subunits to proton translocation.</text>
</comment>
<comment type="function">
    <text evidence="1">Component of the F(0) channel, it forms part of the peripheral stalk, linking F(1) to F(0).</text>
</comment>
<comment type="subunit">
    <text evidence="1">F-type ATPases have 2 components, F(1) - the catalytic core - and F(0) - the membrane proton channel. F(1) has five subunits: alpha(3), beta(3), gamma(1), delta(1), epsilon(1). F(0) has four main subunits: a(1), b(1), b'(1) and c(10-14). The alpha and beta chains form an alternating ring which encloses part of the gamma chain. F(1) is attached to F(0) by a central stalk formed by the gamma and epsilon chains, while a peripheral stalk is formed by the delta, b and b' chains.</text>
</comment>
<comment type="subcellular location">
    <subcellularLocation>
        <location evidence="1">Plastid</location>
        <location evidence="1">Chloroplast thylakoid membrane</location>
        <topology evidence="1">Single-pass membrane protein</topology>
    </subcellularLocation>
</comment>
<comment type="miscellaneous">
    <text>In plastids the F-type ATPase is also known as CF(1)CF(0).</text>
</comment>
<comment type="similarity">
    <text evidence="1">Belongs to the ATPase B chain family.</text>
</comment>
<proteinExistence type="inferred from homology"/>
<keyword id="KW-0066">ATP synthesis</keyword>
<keyword id="KW-0138">CF(0)</keyword>
<keyword id="KW-0150">Chloroplast</keyword>
<keyword id="KW-0375">Hydrogen ion transport</keyword>
<keyword id="KW-0406">Ion transport</keyword>
<keyword id="KW-0472">Membrane</keyword>
<keyword id="KW-0934">Plastid</keyword>
<keyword id="KW-0793">Thylakoid</keyword>
<keyword id="KW-0812">Transmembrane</keyword>
<keyword id="KW-1133">Transmembrane helix</keyword>
<keyword id="KW-0813">Transport</keyword>
<evidence type="ECO:0000255" key="1">
    <source>
        <dbReference type="HAMAP-Rule" id="MF_01398"/>
    </source>
</evidence>
<organism>
    <name type="scientific">Acorus calamus</name>
    <name type="common">Sweet flag</name>
    <dbReference type="NCBI Taxonomy" id="4465"/>
    <lineage>
        <taxon>Eukaryota</taxon>
        <taxon>Viridiplantae</taxon>
        <taxon>Streptophyta</taxon>
        <taxon>Embryophyta</taxon>
        <taxon>Tracheophyta</taxon>
        <taxon>Spermatophyta</taxon>
        <taxon>Magnoliopsida</taxon>
        <taxon>Liliopsida</taxon>
        <taxon>Acoraceae</taxon>
        <taxon>Acorus</taxon>
    </lineage>
</organism>
<dbReference type="EMBL" id="AJ879453">
    <property type="protein sequence ID" value="CAI53780.1"/>
    <property type="molecule type" value="Genomic_DNA"/>
</dbReference>
<dbReference type="RefSeq" id="YP_319751.1">
    <property type="nucleotide sequence ID" value="NC_007407.1"/>
</dbReference>
<dbReference type="SMR" id="Q3V548"/>
<dbReference type="GeneID" id="3677507"/>
<dbReference type="GO" id="GO:0009535">
    <property type="term" value="C:chloroplast thylakoid membrane"/>
    <property type="evidence" value="ECO:0007669"/>
    <property type="project" value="UniProtKB-SubCell"/>
</dbReference>
<dbReference type="GO" id="GO:0045259">
    <property type="term" value="C:proton-transporting ATP synthase complex"/>
    <property type="evidence" value="ECO:0007669"/>
    <property type="project" value="UniProtKB-KW"/>
</dbReference>
<dbReference type="GO" id="GO:0046933">
    <property type="term" value="F:proton-transporting ATP synthase activity, rotational mechanism"/>
    <property type="evidence" value="ECO:0007669"/>
    <property type="project" value="UniProtKB-UniRule"/>
</dbReference>
<dbReference type="CDD" id="cd06503">
    <property type="entry name" value="ATP-synt_Fo_b"/>
    <property type="match status" value="1"/>
</dbReference>
<dbReference type="HAMAP" id="MF_01398">
    <property type="entry name" value="ATP_synth_b_bprime"/>
    <property type="match status" value="1"/>
</dbReference>
<dbReference type="InterPro" id="IPR002146">
    <property type="entry name" value="ATP_synth_b/b'su_bac/chlpt"/>
</dbReference>
<dbReference type="PANTHER" id="PTHR34264">
    <property type="entry name" value="ATP SYNTHASE SUBUNIT B, CHLOROPLASTIC"/>
    <property type="match status" value="1"/>
</dbReference>
<dbReference type="PANTHER" id="PTHR34264:SF8">
    <property type="entry name" value="ATP SYNTHASE SUBUNIT B, CHLOROPLASTIC"/>
    <property type="match status" value="1"/>
</dbReference>
<dbReference type="Pfam" id="PF00430">
    <property type="entry name" value="ATP-synt_B"/>
    <property type="match status" value="1"/>
</dbReference>
<gene>
    <name evidence="1" type="primary">atpF</name>
</gene>
<reference key="1">
    <citation type="journal article" date="2005" name="Mol. Biol. Evol.">
        <title>Analysis of Acorus calamus chloroplast genome and its phylogenetic implications.</title>
        <authorList>
            <person name="Goremykin V.V."/>
            <person name="Holland B."/>
            <person name="Hirsch-Ernst K.I."/>
            <person name="Hellwig F.H."/>
        </authorList>
    </citation>
    <scope>NUCLEOTIDE SEQUENCE [LARGE SCALE GENOMIC DNA]</scope>
</reference>
<sequence>MKNITDSFVSLGHWPFAGSFGFNTDILATNLINLSVVLGVLIFFGKGVLSDLLDNRRQRILSTIRNSEELRRGALEQLEKARARLRKVEMEADEYRVNGYSEIEREKMNLINATYENLERLENYKNETLHFEQQRAINQVRQRVFQQALQGALGTLNNCLNSELHFRTISANIGMLGAMKEITD</sequence>
<protein>
    <recommendedName>
        <fullName evidence="1">ATP synthase subunit b, chloroplastic</fullName>
    </recommendedName>
    <alternativeName>
        <fullName evidence="1">ATP synthase F(0) sector subunit b</fullName>
    </alternativeName>
    <alternativeName>
        <fullName evidence="1">ATPase subunit I</fullName>
    </alternativeName>
</protein>